<protein>
    <recommendedName>
        <fullName evidence="4">Pinoresinol reductase 2</fullName>
        <shortName evidence="4">AtPrR2</shortName>
    </recommendedName>
    <alternativeName>
        <fullName evidence="5">(-)-pinoresinol reductase</fullName>
        <ecNumber evidence="2">1.23.1.3</ecNumber>
    </alternativeName>
    <alternativeName>
        <fullName evidence="4">Pinoresinol-lariciresinol reductase 2</fullName>
        <shortName evidence="4">AtPLR2</shortName>
    </alternativeName>
</protein>
<sequence>MKETNFGEKTRVLVVGGTGSLGRRIVSACLAEGHETYVLQRPEIGVDIEKVQLLLSFKRLGAHLVEGSFSDHQSLVSAVKQVDVVVSAMSGVHFRTHNIPVQLKLVAAIKEAGNVKRFLPSEFGMDPSRMGHAMPPGSETFDQKMEIRNAIKAAGISHTYLVGACFAAYFGGNLSQMGTLFPPKNKVDIYGDGNVKVVFVDEDDMAKYTAKTLNDPRTLNKTVYVRPTDNILTQMELVQIWEKLTEKELEKTYVSGNDFLADIEDKEISHQAGLGHFYHIYYEGCLTDHEVGDDEEATKLYPDVKYKRMDEYLKIFV</sequence>
<evidence type="ECO:0000250" key="1">
    <source>
        <dbReference type="UniProtKB" id="Q9LD14"/>
    </source>
</evidence>
<evidence type="ECO:0000269" key="2">
    <source>
    </source>
</evidence>
<evidence type="ECO:0000269" key="3">
    <source>
    </source>
</evidence>
<evidence type="ECO:0000303" key="4">
    <source>
    </source>
</evidence>
<evidence type="ECO:0000305" key="5"/>
<evidence type="ECO:0000312" key="6">
    <source>
        <dbReference type="Araport" id="AT4G13660"/>
    </source>
</evidence>
<evidence type="ECO:0000312" key="7">
    <source>
        <dbReference type="EMBL" id="CAB36830.1"/>
    </source>
</evidence>
<evidence type="ECO:0007744" key="8">
    <source>
        <dbReference type="PDB" id="7CSH"/>
    </source>
</evidence>
<evidence type="ECO:0007829" key="9">
    <source>
        <dbReference type="PDB" id="7CSH"/>
    </source>
</evidence>
<keyword id="KW-0002">3D-structure</keyword>
<keyword id="KW-0521">NADP</keyword>
<keyword id="KW-0560">Oxidoreductase</keyword>
<keyword id="KW-1185">Reference proteome</keyword>
<organism>
    <name type="scientific">Arabidopsis thaliana</name>
    <name type="common">Mouse-ear cress</name>
    <dbReference type="NCBI Taxonomy" id="3702"/>
    <lineage>
        <taxon>Eukaryota</taxon>
        <taxon>Viridiplantae</taxon>
        <taxon>Streptophyta</taxon>
        <taxon>Embryophyta</taxon>
        <taxon>Tracheophyta</taxon>
        <taxon>Spermatophyta</taxon>
        <taxon>Magnoliopsida</taxon>
        <taxon>eudicotyledons</taxon>
        <taxon>Gunneridae</taxon>
        <taxon>Pentapetalae</taxon>
        <taxon>rosids</taxon>
        <taxon>malvids</taxon>
        <taxon>Brassicales</taxon>
        <taxon>Brassicaceae</taxon>
        <taxon>Camelineae</taxon>
        <taxon>Arabidopsis</taxon>
    </lineage>
</organism>
<accession>Q9SVP6</accession>
<feature type="chain" id="PRO_0000422930" description="Pinoresinol reductase 2">
    <location>
        <begin position="1"/>
        <end position="317"/>
    </location>
</feature>
<feature type="active site" description="Proton acceptor" evidence="1">
    <location>
        <position position="144"/>
    </location>
</feature>
<feature type="binding site" evidence="3 8">
    <location>
        <position position="18"/>
    </location>
    <ligand>
        <name>NADP(+)</name>
        <dbReference type="ChEBI" id="CHEBI:58349"/>
    </ligand>
</feature>
<feature type="binding site" evidence="3 8">
    <location>
        <position position="20"/>
    </location>
    <ligand>
        <name>NADP(+)</name>
        <dbReference type="ChEBI" id="CHEBI:58349"/>
    </ligand>
</feature>
<feature type="binding site" evidence="3 8">
    <location>
        <position position="21"/>
    </location>
    <ligand>
        <name>NADP(+)</name>
        <dbReference type="ChEBI" id="CHEBI:58349"/>
    </ligand>
</feature>
<feature type="binding site" evidence="3 8">
    <location>
        <position position="41"/>
    </location>
    <ligand>
        <name>NADP(+)</name>
        <dbReference type="ChEBI" id="CHEBI:58349"/>
    </ligand>
</feature>
<feature type="binding site" evidence="3 8">
    <location>
        <position position="50"/>
    </location>
    <ligand>
        <name>NADP(+)</name>
        <dbReference type="ChEBI" id="CHEBI:58349"/>
    </ligand>
</feature>
<feature type="binding site" evidence="3 8">
    <location>
        <position position="90"/>
    </location>
    <ligand>
        <name>NADP(+)</name>
        <dbReference type="ChEBI" id="CHEBI:58349"/>
    </ligand>
</feature>
<feature type="binding site" evidence="3 8">
    <location>
        <position position="91"/>
    </location>
    <ligand>
        <name>NADP(+)</name>
        <dbReference type="ChEBI" id="CHEBI:58349"/>
    </ligand>
</feature>
<feature type="binding site" evidence="3 8">
    <location>
        <position position="95"/>
    </location>
    <ligand>
        <name>NADP(+)</name>
        <dbReference type="ChEBI" id="CHEBI:58349"/>
    </ligand>
</feature>
<feature type="binding site" evidence="3 8">
    <location>
        <position position="98"/>
    </location>
    <ligand>
        <name>NADP(+)</name>
        <dbReference type="ChEBI" id="CHEBI:58349"/>
    </ligand>
</feature>
<feature type="binding site" evidence="3 8">
    <location>
        <position position="121"/>
    </location>
    <ligand>
        <name>NADP(+)</name>
        <dbReference type="ChEBI" id="CHEBI:58349"/>
    </ligand>
</feature>
<feature type="binding site" evidence="3 8">
    <location>
        <position position="125"/>
    </location>
    <ligand>
        <name>(-)-pinoresinol</name>
        <dbReference type="ChEBI" id="CHEBI:67245"/>
    </ligand>
</feature>
<feature type="binding site" evidence="3 8">
    <location>
        <position position="144"/>
    </location>
    <ligand>
        <name>NADP(+)</name>
        <dbReference type="ChEBI" id="CHEBI:58349"/>
    </ligand>
</feature>
<feature type="binding site" evidence="3 8">
    <location>
        <position position="166"/>
    </location>
    <ligand>
        <name>NADP(+)</name>
        <dbReference type="ChEBI" id="CHEBI:58349"/>
    </ligand>
</feature>
<feature type="binding site" evidence="3 8">
    <location>
        <position position="178"/>
    </location>
    <ligand>
        <name>(-)-pinoresinol</name>
        <dbReference type="ChEBI" id="CHEBI:67245"/>
    </ligand>
</feature>
<feature type="strand" evidence="9">
    <location>
        <begin position="11"/>
        <end position="16"/>
    </location>
</feature>
<feature type="helix" evidence="9">
    <location>
        <begin position="20"/>
        <end position="32"/>
    </location>
</feature>
<feature type="strand" evidence="9">
    <location>
        <begin position="35"/>
        <end position="40"/>
    </location>
</feature>
<feature type="helix" evidence="9">
    <location>
        <begin position="42"/>
        <end position="44"/>
    </location>
</feature>
<feature type="helix" evidence="9">
    <location>
        <begin position="48"/>
        <end position="59"/>
    </location>
</feature>
<feature type="strand" evidence="9">
    <location>
        <begin position="63"/>
        <end position="66"/>
    </location>
</feature>
<feature type="helix" evidence="9">
    <location>
        <begin position="72"/>
        <end position="79"/>
    </location>
</feature>
<feature type="strand" evidence="9">
    <location>
        <begin position="83"/>
        <end position="87"/>
    </location>
</feature>
<feature type="turn" evidence="9">
    <location>
        <begin position="93"/>
        <end position="95"/>
    </location>
</feature>
<feature type="helix" evidence="9">
    <location>
        <begin position="99"/>
        <end position="101"/>
    </location>
</feature>
<feature type="helix" evidence="9">
    <location>
        <begin position="102"/>
        <end position="112"/>
    </location>
</feature>
<feature type="strand" evidence="9">
    <location>
        <begin position="116"/>
        <end position="119"/>
    </location>
</feature>
<feature type="helix" evidence="9">
    <location>
        <begin position="127"/>
        <end position="129"/>
    </location>
</feature>
<feature type="turn" evidence="9">
    <location>
        <begin position="135"/>
        <end position="137"/>
    </location>
</feature>
<feature type="helix" evidence="9">
    <location>
        <begin position="138"/>
        <end position="154"/>
    </location>
</feature>
<feature type="strand" evidence="9">
    <location>
        <begin position="158"/>
        <end position="162"/>
    </location>
</feature>
<feature type="helix" evidence="9">
    <location>
        <begin position="167"/>
        <end position="170"/>
    </location>
</feature>
<feature type="turn" evidence="9">
    <location>
        <begin position="171"/>
        <end position="175"/>
    </location>
</feature>
<feature type="strand" evidence="9">
    <location>
        <begin position="184"/>
        <end position="190"/>
    </location>
</feature>
<feature type="strand" evidence="9">
    <location>
        <begin position="195"/>
        <end position="200"/>
    </location>
</feature>
<feature type="helix" evidence="9">
    <location>
        <begin position="202"/>
        <end position="212"/>
    </location>
</feature>
<feature type="helix" evidence="9">
    <location>
        <begin position="216"/>
        <end position="218"/>
    </location>
</feature>
<feature type="strand" evidence="9">
    <location>
        <begin position="221"/>
        <end position="224"/>
    </location>
</feature>
<feature type="helix" evidence="9">
    <location>
        <begin position="228"/>
        <end position="230"/>
    </location>
</feature>
<feature type="strand" evidence="9">
    <location>
        <begin position="231"/>
        <end position="233"/>
    </location>
</feature>
<feature type="helix" evidence="9">
    <location>
        <begin position="234"/>
        <end position="245"/>
    </location>
</feature>
<feature type="strand" evidence="9">
    <location>
        <begin position="250"/>
        <end position="254"/>
    </location>
</feature>
<feature type="helix" evidence="9">
    <location>
        <begin position="256"/>
        <end position="259"/>
    </location>
</feature>
<feature type="turn" evidence="9">
    <location>
        <begin position="260"/>
        <end position="262"/>
    </location>
</feature>
<feature type="helix" evidence="9">
    <location>
        <begin position="263"/>
        <end position="265"/>
    </location>
</feature>
<feature type="helix" evidence="9">
    <location>
        <begin position="268"/>
        <end position="281"/>
    </location>
</feature>
<feature type="turn" evidence="9">
    <location>
        <begin position="285"/>
        <end position="287"/>
    </location>
</feature>
<feature type="helix" evidence="9">
    <location>
        <begin position="293"/>
        <end position="295"/>
    </location>
</feature>
<feature type="helix" evidence="9">
    <location>
        <begin position="297"/>
        <end position="300"/>
    </location>
</feature>
<feature type="helix" evidence="9">
    <location>
        <begin position="309"/>
        <end position="313"/>
    </location>
</feature>
<feature type="helix" evidence="9">
    <location>
        <begin position="314"/>
        <end position="316"/>
    </location>
</feature>
<name>PILR2_ARATH</name>
<gene>
    <name evidence="4" type="primary">PRR2</name>
    <name evidence="4" type="synonym">PLR2</name>
    <name evidence="6" type="ordered locus">At4g13660</name>
    <name evidence="7" type="ORF">F18A5.50</name>
</gene>
<dbReference type="EC" id="1.23.1.3" evidence="2"/>
<dbReference type="EMBL" id="AL035528">
    <property type="protein sequence ID" value="CAB36830.1"/>
    <property type="molecule type" value="Genomic_DNA"/>
</dbReference>
<dbReference type="EMBL" id="AL161537">
    <property type="protein sequence ID" value="CAB78408.1"/>
    <property type="molecule type" value="Genomic_DNA"/>
</dbReference>
<dbReference type="EMBL" id="CP002687">
    <property type="protein sequence ID" value="AEE83310.1"/>
    <property type="molecule type" value="Genomic_DNA"/>
</dbReference>
<dbReference type="EMBL" id="CP002687">
    <property type="protein sequence ID" value="ANM67572.1"/>
    <property type="molecule type" value="Genomic_DNA"/>
</dbReference>
<dbReference type="EMBL" id="BT002882">
    <property type="protein sequence ID" value="AAO22699.1"/>
    <property type="molecule type" value="mRNA"/>
</dbReference>
<dbReference type="EMBL" id="BT004406">
    <property type="protein sequence ID" value="AAO42400.1"/>
    <property type="molecule type" value="mRNA"/>
</dbReference>
<dbReference type="PIR" id="T05235">
    <property type="entry name" value="T05235"/>
</dbReference>
<dbReference type="RefSeq" id="NP_001319922.1">
    <property type="nucleotide sequence ID" value="NM_001340871.1"/>
</dbReference>
<dbReference type="RefSeq" id="NP_193102.1">
    <property type="nucleotide sequence ID" value="NM_117440.3"/>
</dbReference>
<dbReference type="PDB" id="7CSG">
    <property type="method" value="X-ray"/>
    <property type="resolution" value="2.00 A"/>
    <property type="chains" value="A/B=1-317"/>
</dbReference>
<dbReference type="PDB" id="7CSH">
    <property type="method" value="X-ray"/>
    <property type="resolution" value="1.59 A"/>
    <property type="chains" value="A=1-317"/>
</dbReference>
<dbReference type="PDBsum" id="7CSG"/>
<dbReference type="PDBsum" id="7CSH"/>
<dbReference type="SMR" id="Q9SVP6"/>
<dbReference type="BioGRID" id="12297">
    <property type="interactions" value="1"/>
</dbReference>
<dbReference type="FunCoup" id="Q9SVP6">
    <property type="interactions" value="49"/>
</dbReference>
<dbReference type="STRING" id="3702.Q9SVP6"/>
<dbReference type="PaxDb" id="3702-AT4G13660.1"/>
<dbReference type="ProteomicsDB" id="236629"/>
<dbReference type="EnsemblPlants" id="AT4G13660.1">
    <property type="protein sequence ID" value="AT4G13660.1"/>
    <property type="gene ID" value="AT4G13660"/>
</dbReference>
<dbReference type="EnsemblPlants" id="AT4G13660.2">
    <property type="protein sequence ID" value="AT4G13660.2"/>
    <property type="gene ID" value="AT4G13660"/>
</dbReference>
<dbReference type="GeneID" id="827000"/>
<dbReference type="Gramene" id="AT4G13660.1">
    <property type="protein sequence ID" value="AT4G13660.1"/>
    <property type="gene ID" value="AT4G13660"/>
</dbReference>
<dbReference type="Gramene" id="AT4G13660.2">
    <property type="protein sequence ID" value="AT4G13660.2"/>
    <property type="gene ID" value="AT4G13660"/>
</dbReference>
<dbReference type="KEGG" id="ath:AT4G13660"/>
<dbReference type="Araport" id="AT4G13660"/>
<dbReference type="TAIR" id="AT4G13660">
    <property type="gene designation" value="PRR2"/>
</dbReference>
<dbReference type="eggNOG" id="ENOG502QQTV">
    <property type="taxonomic scope" value="Eukaryota"/>
</dbReference>
<dbReference type="HOGENOM" id="CLU_060833_0_1_1"/>
<dbReference type="InParanoid" id="Q9SVP6"/>
<dbReference type="OMA" id="RTHCITL"/>
<dbReference type="PhylomeDB" id="Q9SVP6"/>
<dbReference type="BioCyc" id="ARA:AT4G13660-MONOMER"/>
<dbReference type="BRENDA" id="1.23.1.1">
    <property type="organism ID" value="399"/>
</dbReference>
<dbReference type="BRENDA" id="1.23.1.2">
    <property type="organism ID" value="399"/>
</dbReference>
<dbReference type="BRENDA" id="1.23.1.3">
    <property type="organism ID" value="399"/>
</dbReference>
<dbReference type="PRO" id="PR:Q9SVP6"/>
<dbReference type="Proteomes" id="UP000006548">
    <property type="component" value="Chromosome 4"/>
</dbReference>
<dbReference type="ExpressionAtlas" id="Q9SVP6">
    <property type="expression patterns" value="baseline and differential"/>
</dbReference>
<dbReference type="GO" id="GO:0009506">
    <property type="term" value="C:plasmodesma"/>
    <property type="evidence" value="ECO:0007005"/>
    <property type="project" value="TAIR"/>
</dbReference>
<dbReference type="GO" id="GO:0010283">
    <property type="term" value="F:pinoresinol reductase activity"/>
    <property type="evidence" value="ECO:0000314"/>
    <property type="project" value="TAIR"/>
</dbReference>
<dbReference type="GO" id="GO:0009807">
    <property type="term" value="P:lignan biosynthetic process"/>
    <property type="evidence" value="ECO:0000314"/>
    <property type="project" value="TAIR"/>
</dbReference>
<dbReference type="CDD" id="cd05259">
    <property type="entry name" value="PCBER_SDR_a"/>
    <property type="match status" value="1"/>
</dbReference>
<dbReference type="Gene3D" id="3.40.50.720">
    <property type="entry name" value="NAD(P)-binding Rossmann-like Domain"/>
    <property type="match status" value="1"/>
</dbReference>
<dbReference type="Gene3D" id="3.90.25.10">
    <property type="entry name" value="UDP-galactose 4-epimerase, domain 1"/>
    <property type="match status" value="1"/>
</dbReference>
<dbReference type="InterPro" id="IPR036291">
    <property type="entry name" value="NAD(P)-bd_dom_sf"/>
</dbReference>
<dbReference type="InterPro" id="IPR008030">
    <property type="entry name" value="NmrA-like"/>
</dbReference>
<dbReference type="InterPro" id="IPR050608">
    <property type="entry name" value="NmrA-type/Isoflavone_red_sf"/>
</dbReference>
<dbReference type="InterPro" id="IPR045312">
    <property type="entry name" value="PCBER-like"/>
</dbReference>
<dbReference type="PANTHER" id="PTHR43349:SF4">
    <property type="entry name" value="PINORESINOL REDUCTASE 1-RELATED"/>
    <property type="match status" value="1"/>
</dbReference>
<dbReference type="PANTHER" id="PTHR43349">
    <property type="entry name" value="PINORESINOL REDUCTASE-RELATED"/>
    <property type="match status" value="1"/>
</dbReference>
<dbReference type="Pfam" id="PF05368">
    <property type="entry name" value="NmrA"/>
    <property type="match status" value="1"/>
</dbReference>
<dbReference type="SUPFAM" id="SSF51735">
    <property type="entry name" value="NAD(P)-binding Rossmann-fold domains"/>
    <property type="match status" value="1"/>
</dbReference>
<comment type="function">
    <text evidence="2">Reductase involved in lignan biosynthesis (PubMed:18347017). Unlike conventional pinoresinol reductases that can reduce both pinoresinol and lariciresinol, PRR2 shows a strict substrate selectivity for (-)-pinoresinol (PubMed:18347017). No activity with (+)-pinoresinol or lariciresinol (PubMed:18347017). Abstracts the 4R-hydride from the NADPH cofactor during catalysis (PubMed:18347017).</text>
</comment>
<comment type="catalytic activity">
    <reaction evidence="2">
        <text>(-)-lariciresinol + NADP(+) = (-)-pinoresinol + NADPH + H(+)</text>
        <dbReference type="Rhea" id="RHEA:34427"/>
        <dbReference type="ChEBI" id="CHEBI:15378"/>
        <dbReference type="ChEBI" id="CHEBI:57783"/>
        <dbReference type="ChEBI" id="CHEBI:58349"/>
        <dbReference type="ChEBI" id="CHEBI:67244"/>
        <dbReference type="ChEBI" id="CHEBI:67245"/>
        <dbReference type="EC" id="1.23.1.3"/>
    </reaction>
</comment>
<comment type="biophysicochemical properties">
    <kinetics>
        <KM evidence="2">12.6 uM for (-)-pinoresinol</KM>
        <Vmax evidence="2">5.9 nmol/min/mg enzyme toward pinoresinol</Vmax>
    </kinetics>
</comment>
<comment type="subunit">
    <text evidence="3">Forms homodimers.</text>
</comment>
<comment type="tissue specificity">
    <text evidence="2">Expressed in roots. Detected in stems.</text>
</comment>
<comment type="disruption phenotype">
    <text evidence="2">No significant difference in lariciresinol content (PubMed:18347017). Prr1 and prr2 double mutants show a complete inhibition of lariciresinol biosynthesis (PubMed:18347017).</text>
</comment>
<comment type="similarity">
    <text evidence="5">Belongs to the NmrA-type oxidoreductase family. Isoflavone reductase subfamily.</text>
</comment>
<reference key="1">
    <citation type="journal article" date="1999" name="Nature">
        <title>Sequence and analysis of chromosome 4 of the plant Arabidopsis thaliana.</title>
        <authorList>
            <person name="Mayer K.F.X."/>
            <person name="Schueller C."/>
            <person name="Wambutt R."/>
            <person name="Murphy G."/>
            <person name="Volckaert G."/>
            <person name="Pohl T."/>
            <person name="Duesterhoeft A."/>
            <person name="Stiekema W."/>
            <person name="Entian K.-D."/>
            <person name="Terryn N."/>
            <person name="Harris B."/>
            <person name="Ansorge W."/>
            <person name="Brandt P."/>
            <person name="Grivell L.A."/>
            <person name="Rieger M."/>
            <person name="Weichselgartner M."/>
            <person name="de Simone V."/>
            <person name="Obermaier B."/>
            <person name="Mache R."/>
            <person name="Mueller M."/>
            <person name="Kreis M."/>
            <person name="Delseny M."/>
            <person name="Puigdomenech P."/>
            <person name="Watson M."/>
            <person name="Schmidtheini T."/>
            <person name="Reichert B."/>
            <person name="Portetelle D."/>
            <person name="Perez-Alonso M."/>
            <person name="Boutry M."/>
            <person name="Bancroft I."/>
            <person name="Vos P."/>
            <person name="Hoheisel J."/>
            <person name="Zimmermann W."/>
            <person name="Wedler H."/>
            <person name="Ridley P."/>
            <person name="Langham S.-A."/>
            <person name="McCullagh B."/>
            <person name="Bilham L."/>
            <person name="Robben J."/>
            <person name="van der Schueren J."/>
            <person name="Grymonprez B."/>
            <person name="Chuang Y.-J."/>
            <person name="Vandenbussche F."/>
            <person name="Braeken M."/>
            <person name="Weltjens I."/>
            <person name="Voet M."/>
            <person name="Bastiaens I."/>
            <person name="Aert R."/>
            <person name="Defoor E."/>
            <person name="Weitzenegger T."/>
            <person name="Bothe G."/>
            <person name="Ramsperger U."/>
            <person name="Hilbert H."/>
            <person name="Braun M."/>
            <person name="Holzer E."/>
            <person name="Brandt A."/>
            <person name="Peters S."/>
            <person name="van Staveren M."/>
            <person name="Dirkse W."/>
            <person name="Mooijman P."/>
            <person name="Klein Lankhorst R."/>
            <person name="Rose M."/>
            <person name="Hauf J."/>
            <person name="Koetter P."/>
            <person name="Berneiser S."/>
            <person name="Hempel S."/>
            <person name="Feldpausch M."/>
            <person name="Lamberth S."/>
            <person name="Van den Daele H."/>
            <person name="De Keyser A."/>
            <person name="Buysshaert C."/>
            <person name="Gielen J."/>
            <person name="Villarroel R."/>
            <person name="De Clercq R."/>
            <person name="van Montagu M."/>
            <person name="Rogers J."/>
            <person name="Cronin A."/>
            <person name="Quail M.A."/>
            <person name="Bray-Allen S."/>
            <person name="Clark L."/>
            <person name="Doggett J."/>
            <person name="Hall S."/>
            <person name="Kay M."/>
            <person name="Lennard N."/>
            <person name="McLay K."/>
            <person name="Mayes R."/>
            <person name="Pettett A."/>
            <person name="Rajandream M.A."/>
            <person name="Lyne M."/>
            <person name="Benes V."/>
            <person name="Rechmann S."/>
            <person name="Borkova D."/>
            <person name="Bloecker H."/>
            <person name="Scharfe M."/>
            <person name="Grimm M."/>
            <person name="Loehnert T.-H."/>
            <person name="Dose S."/>
            <person name="de Haan M."/>
            <person name="Maarse A.C."/>
            <person name="Schaefer M."/>
            <person name="Mueller-Auer S."/>
            <person name="Gabel C."/>
            <person name="Fuchs M."/>
            <person name="Fartmann B."/>
            <person name="Granderath K."/>
            <person name="Dauner D."/>
            <person name="Herzl A."/>
            <person name="Neumann S."/>
            <person name="Argiriou A."/>
            <person name="Vitale D."/>
            <person name="Liguori R."/>
            <person name="Piravandi E."/>
            <person name="Massenet O."/>
            <person name="Quigley F."/>
            <person name="Clabauld G."/>
            <person name="Muendlein A."/>
            <person name="Felber R."/>
            <person name="Schnabl S."/>
            <person name="Hiller R."/>
            <person name="Schmidt W."/>
            <person name="Lecharny A."/>
            <person name="Aubourg S."/>
            <person name="Chefdor F."/>
            <person name="Cooke R."/>
            <person name="Berger C."/>
            <person name="Monfort A."/>
            <person name="Casacuberta E."/>
            <person name="Gibbons T."/>
            <person name="Weber N."/>
            <person name="Vandenbol M."/>
            <person name="Bargues M."/>
            <person name="Terol J."/>
            <person name="Torres A."/>
            <person name="Perez-Perez A."/>
            <person name="Purnelle B."/>
            <person name="Bent E."/>
            <person name="Johnson S."/>
            <person name="Tacon D."/>
            <person name="Jesse T."/>
            <person name="Heijnen L."/>
            <person name="Schwarz S."/>
            <person name="Scholler P."/>
            <person name="Heber S."/>
            <person name="Francs P."/>
            <person name="Bielke C."/>
            <person name="Frishman D."/>
            <person name="Haase D."/>
            <person name="Lemcke K."/>
            <person name="Mewes H.-W."/>
            <person name="Stocker S."/>
            <person name="Zaccaria P."/>
            <person name="Bevan M."/>
            <person name="Wilson R.K."/>
            <person name="de la Bastide M."/>
            <person name="Habermann K."/>
            <person name="Parnell L."/>
            <person name="Dedhia N."/>
            <person name="Gnoj L."/>
            <person name="Schutz K."/>
            <person name="Huang E."/>
            <person name="Spiegel L."/>
            <person name="Sekhon M."/>
            <person name="Murray J."/>
            <person name="Sheet P."/>
            <person name="Cordes M."/>
            <person name="Abu-Threideh J."/>
            <person name="Stoneking T."/>
            <person name="Kalicki J."/>
            <person name="Graves T."/>
            <person name="Harmon G."/>
            <person name="Edwards J."/>
            <person name="Latreille P."/>
            <person name="Courtney L."/>
            <person name="Cloud J."/>
            <person name="Abbott A."/>
            <person name="Scott K."/>
            <person name="Johnson D."/>
            <person name="Minx P."/>
            <person name="Bentley D."/>
            <person name="Fulton B."/>
            <person name="Miller N."/>
            <person name="Greco T."/>
            <person name="Kemp K."/>
            <person name="Kramer J."/>
            <person name="Fulton L."/>
            <person name="Mardis E."/>
            <person name="Dante M."/>
            <person name="Pepin K."/>
            <person name="Hillier L.W."/>
            <person name="Nelson J."/>
            <person name="Spieth J."/>
            <person name="Ryan E."/>
            <person name="Andrews S."/>
            <person name="Geisel C."/>
            <person name="Layman D."/>
            <person name="Du H."/>
            <person name="Ali J."/>
            <person name="Berghoff A."/>
            <person name="Jones K."/>
            <person name="Drone K."/>
            <person name="Cotton M."/>
            <person name="Joshu C."/>
            <person name="Antonoiu B."/>
            <person name="Zidanic M."/>
            <person name="Strong C."/>
            <person name="Sun H."/>
            <person name="Lamar B."/>
            <person name="Yordan C."/>
            <person name="Ma P."/>
            <person name="Zhong J."/>
            <person name="Preston R."/>
            <person name="Vil D."/>
            <person name="Shekher M."/>
            <person name="Matero A."/>
            <person name="Shah R."/>
            <person name="Swaby I.K."/>
            <person name="O'Shaughnessy A."/>
            <person name="Rodriguez M."/>
            <person name="Hoffman J."/>
            <person name="Till S."/>
            <person name="Granat S."/>
            <person name="Shohdy N."/>
            <person name="Hasegawa A."/>
            <person name="Hameed A."/>
            <person name="Lodhi M."/>
            <person name="Johnson A."/>
            <person name="Chen E."/>
            <person name="Marra M.A."/>
            <person name="Martienssen R."/>
            <person name="McCombie W.R."/>
        </authorList>
    </citation>
    <scope>NUCLEOTIDE SEQUENCE [LARGE SCALE GENOMIC DNA]</scope>
    <source>
        <strain>cv. Columbia</strain>
    </source>
</reference>
<reference key="2">
    <citation type="journal article" date="2017" name="Plant J.">
        <title>Araport11: a complete reannotation of the Arabidopsis thaliana reference genome.</title>
        <authorList>
            <person name="Cheng C.Y."/>
            <person name="Krishnakumar V."/>
            <person name="Chan A.P."/>
            <person name="Thibaud-Nissen F."/>
            <person name="Schobel S."/>
            <person name="Town C.D."/>
        </authorList>
    </citation>
    <scope>GENOME REANNOTATION</scope>
    <source>
        <strain>cv. Columbia</strain>
    </source>
</reference>
<reference key="3">
    <citation type="journal article" date="2003" name="Science">
        <title>Empirical analysis of transcriptional activity in the Arabidopsis genome.</title>
        <authorList>
            <person name="Yamada K."/>
            <person name="Lim J."/>
            <person name="Dale J.M."/>
            <person name="Chen H."/>
            <person name="Shinn P."/>
            <person name="Palm C.J."/>
            <person name="Southwick A.M."/>
            <person name="Wu H.C."/>
            <person name="Kim C.J."/>
            <person name="Nguyen M."/>
            <person name="Pham P.K."/>
            <person name="Cheuk R.F."/>
            <person name="Karlin-Newmann G."/>
            <person name="Liu S.X."/>
            <person name="Lam B."/>
            <person name="Sakano H."/>
            <person name="Wu T."/>
            <person name="Yu G."/>
            <person name="Miranda M."/>
            <person name="Quach H.L."/>
            <person name="Tripp M."/>
            <person name="Chang C.H."/>
            <person name="Lee J.M."/>
            <person name="Toriumi M.J."/>
            <person name="Chan M.M."/>
            <person name="Tang C.C."/>
            <person name="Onodera C.S."/>
            <person name="Deng J.M."/>
            <person name="Akiyama K."/>
            <person name="Ansari Y."/>
            <person name="Arakawa T."/>
            <person name="Banh J."/>
            <person name="Banno F."/>
            <person name="Bowser L."/>
            <person name="Brooks S.Y."/>
            <person name="Carninci P."/>
            <person name="Chao Q."/>
            <person name="Choy N."/>
            <person name="Enju A."/>
            <person name="Goldsmith A.D."/>
            <person name="Gurjal M."/>
            <person name="Hansen N.F."/>
            <person name="Hayashizaki Y."/>
            <person name="Johnson-Hopson C."/>
            <person name="Hsuan V.W."/>
            <person name="Iida K."/>
            <person name="Karnes M."/>
            <person name="Khan S."/>
            <person name="Koesema E."/>
            <person name="Ishida J."/>
            <person name="Jiang P.X."/>
            <person name="Jones T."/>
            <person name="Kawai J."/>
            <person name="Kamiya A."/>
            <person name="Meyers C."/>
            <person name="Nakajima M."/>
            <person name="Narusaka M."/>
            <person name="Seki M."/>
            <person name="Sakurai T."/>
            <person name="Satou M."/>
            <person name="Tamse R."/>
            <person name="Vaysberg M."/>
            <person name="Wallender E.K."/>
            <person name="Wong C."/>
            <person name="Yamamura Y."/>
            <person name="Yuan S."/>
            <person name="Shinozaki K."/>
            <person name="Davis R.W."/>
            <person name="Theologis A."/>
            <person name="Ecker J.R."/>
        </authorList>
    </citation>
    <scope>NUCLEOTIDE SEQUENCE [LARGE SCALE MRNA]</scope>
    <source>
        <strain>cv. Columbia</strain>
    </source>
</reference>
<reference key="4">
    <citation type="journal article" date="2008" name="J. Biol. Chem.">
        <title>Characterization of Arabidopsis thaliana pinoresinol reductase, a new type of enzyme involved in lignan biosynthesis.</title>
        <authorList>
            <person name="Nakatsubo T."/>
            <person name="Mizutani M."/>
            <person name="Suzuki S."/>
            <person name="Hattori T."/>
            <person name="Umezawa T."/>
        </authorList>
    </citation>
    <scope>FUNCTION</scope>
    <scope>CATALYTIC ACTIVITY</scope>
    <scope>BIOPHYSICOCHEMICAL PROPERTIES</scope>
    <scope>DISRUPTION PHENOTYPE</scope>
    <scope>TISSUE SPECIFICITY</scope>
</reference>
<reference key="5">
    <citation type="journal article" date="2021" name="Nat. Commun.">
        <title>Structure-based engineering of substrate specificity for pinoresinol-lariciresinol reductases.</title>
        <authorList>
            <person name="Xiao Y."/>
            <person name="Shao K."/>
            <person name="Zhou J."/>
            <person name="Wang L."/>
            <person name="Ma X."/>
            <person name="Wu D."/>
            <person name="Yang Y."/>
            <person name="Chen J."/>
            <person name="Feng J."/>
            <person name="Qiu S."/>
            <person name="Lv Z."/>
            <person name="Zhang L."/>
            <person name="Zhang P."/>
            <person name="Chen W."/>
        </authorList>
    </citation>
    <scope>X-RAY CRYSTALLOGRAPHY (1.59 ANGSTROMS) IN COMPLEX WITH PINORESINOL AND NADP</scope>
    <scope>SUBUNIT</scope>
</reference>
<proteinExistence type="evidence at protein level"/>